<sequence>MCSDKNITATALVRPSWLRVKAPFSDEYQSTNELIKSLKLNTVCKEAACPNIGECWSKKHATVMILGSICTRACAFCNVSTGKPEQVDEYEPYRLSEAVMKLGLKHVVITSVDRDDISDGGASHFAKCITYIRERSPSTSIEVLTPDFLRKHDAWKIVAKARPDVYNHNIETVPSLYLKVRPGARYYNSLNLLHQVKIFDSSIFTKSGIMVGLGETKHEVLQVMDDLRAAEVDFLTIGQYLRPSARHIDVDRYVAPDEFDYYARVAKSKGFLMVSASPLTRSSYHAGEHFEKLKQMRLQNII</sequence>
<name>LIPA_ORITI</name>
<reference key="1">
    <citation type="journal article" date="2008" name="DNA Res.">
        <title>The whole-genome sequencing of the obligate intracellular bacterium Orientia tsutsugamushi revealed massive gene amplification during reductive genome evolution.</title>
        <authorList>
            <person name="Nakayama K."/>
            <person name="Yamashita A."/>
            <person name="Kurokawa K."/>
            <person name="Morimoto T."/>
            <person name="Ogawa M."/>
            <person name="Fukuhara M."/>
            <person name="Urakami H."/>
            <person name="Ohnishi M."/>
            <person name="Uchiyama I."/>
            <person name="Ogura Y."/>
            <person name="Ooka T."/>
            <person name="Oshima K."/>
            <person name="Tamura A."/>
            <person name="Hattori M."/>
            <person name="Hayashi T."/>
        </authorList>
    </citation>
    <scope>NUCLEOTIDE SEQUENCE [LARGE SCALE GENOMIC DNA]</scope>
    <source>
        <strain>Ikeda</strain>
    </source>
</reference>
<proteinExistence type="inferred from homology"/>
<comment type="function">
    <text evidence="1">Catalyzes the radical-mediated insertion of two sulfur atoms into the C-6 and C-8 positions of the octanoyl moiety bound to the lipoyl domains of lipoate-dependent enzymes, thereby converting the octanoylated domains into lipoylated derivatives.</text>
</comment>
<comment type="catalytic activity">
    <reaction evidence="1">
        <text>[[Fe-S] cluster scaffold protein carrying a second [4Fe-4S](2+) cluster] + N(6)-octanoyl-L-lysyl-[protein] + 2 oxidized [2Fe-2S]-[ferredoxin] + 2 S-adenosyl-L-methionine + 4 H(+) = [[Fe-S] cluster scaffold protein] + N(6)-[(R)-dihydrolipoyl]-L-lysyl-[protein] + 4 Fe(3+) + 2 hydrogen sulfide + 2 5'-deoxyadenosine + 2 L-methionine + 2 reduced [2Fe-2S]-[ferredoxin]</text>
        <dbReference type="Rhea" id="RHEA:16585"/>
        <dbReference type="Rhea" id="RHEA-COMP:9928"/>
        <dbReference type="Rhea" id="RHEA-COMP:10000"/>
        <dbReference type="Rhea" id="RHEA-COMP:10001"/>
        <dbReference type="Rhea" id="RHEA-COMP:10475"/>
        <dbReference type="Rhea" id="RHEA-COMP:14568"/>
        <dbReference type="Rhea" id="RHEA-COMP:14569"/>
        <dbReference type="ChEBI" id="CHEBI:15378"/>
        <dbReference type="ChEBI" id="CHEBI:17319"/>
        <dbReference type="ChEBI" id="CHEBI:29034"/>
        <dbReference type="ChEBI" id="CHEBI:29919"/>
        <dbReference type="ChEBI" id="CHEBI:33722"/>
        <dbReference type="ChEBI" id="CHEBI:33737"/>
        <dbReference type="ChEBI" id="CHEBI:33738"/>
        <dbReference type="ChEBI" id="CHEBI:57844"/>
        <dbReference type="ChEBI" id="CHEBI:59789"/>
        <dbReference type="ChEBI" id="CHEBI:78809"/>
        <dbReference type="ChEBI" id="CHEBI:83100"/>
        <dbReference type="EC" id="2.8.1.8"/>
    </reaction>
</comment>
<comment type="cofactor">
    <cofactor evidence="1">
        <name>[4Fe-4S] cluster</name>
        <dbReference type="ChEBI" id="CHEBI:49883"/>
    </cofactor>
    <text evidence="1">Binds 2 [4Fe-4S] clusters per subunit. One cluster is coordinated with 3 cysteines and an exchangeable S-adenosyl-L-methionine.</text>
</comment>
<comment type="pathway">
    <text evidence="1">Protein modification; protein lipoylation via endogenous pathway; protein N(6)-(lipoyl)lysine from octanoyl-[acyl-carrier-protein]: step 2/2.</text>
</comment>
<comment type="subcellular location">
    <subcellularLocation>
        <location evidence="1">Cytoplasm</location>
    </subcellularLocation>
</comment>
<comment type="similarity">
    <text evidence="1">Belongs to the radical SAM superfamily. Lipoyl synthase family.</text>
</comment>
<organism>
    <name type="scientific">Orientia tsutsugamushi (strain Ikeda)</name>
    <name type="common">Rickettsia tsutsugamushi</name>
    <dbReference type="NCBI Taxonomy" id="334380"/>
    <lineage>
        <taxon>Bacteria</taxon>
        <taxon>Pseudomonadati</taxon>
        <taxon>Pseudomonadota</taxon>
        <taxon>Alphaproteobacteria</taxon>
        <taxon>Rickettsiales</taxon>
        <taxon>Rickettsiaceae</taxon>
        <taxon>Rickettsieae</taxon>
        <taxon>Orientia</taxon>
    </lineage>
</organism>
<evidence type="ECO:0000255" key="1">
    <source>
        <dbReference type="HAMAP-Rule" id="MF_00206"/>
    </source>
</evidence>
<evidence type="ECO:0000255" key="2">
    <source>
        <dbReference type="PROSITE-ProRule" id="PRU01266"/>
    </source>
</evidence>
<accession>B3CQP5</accession>
<gene>
    <name evidence="1" type="primary">lipA</name>
    <name type="ordered locus">OTT_0086</name>
</gene>
<keyword id="KW-0004">4Fe-4S</keyword>
<keyword id="KW-0963">Cytoplasm</keyword>
<keyword id="KW-0408">Iron</keyword>
<keyword id="KW-0411">Iron-sulfur</keyword>
<keyword id="KW-0479">Metal-binding</keyword>
<keyword id="KW-0949">S-adenosyl-L-methionine</keyword>
<keyword id="KW-0808">Transferase</keyword>
<protein>
    <recommendedName>
        <fullName evidence="1">Lipoyl synthase</fullName>
        <ecNumber evidence="1">2.8.1.8</ecNumber>
    </recommendedName>
    <alternativeName>
        <fullName evidence="1">Lip-syn</fullName>
        <shortName evidence="1">LS</shortName>
    </alternativeName>
    <alternativeName>
        <fullName evidence="1">Lipoate synthase</fullName>
    </alternativeName>
    <alternativeName>
        <fullName evidence="1">Lipoic acid synthase</fullName>
    </alternativeName>
    <alternativeName>
        <fullName evidence="1">Sulfur insertion protein LipA</fullName>
    </alternativeName>
</protein>
<feature type="chain" id="PRO_1000099617" description="Lipoyl synthase">
    <location>
        <begin position="1"/>
        <end position="302"/>
    </location>
</feature>
<feature type="domain" description="Radical SAM core" evidence="2">
    <location>
        <begin position="56"/>
        <end position="272"/>
    </location>
</feature>
<feature type="binding site" evidence="1">
    <location>
        <position position="44"/>
    </location>
    <ligand>
        <name>[4Fe-4S] cluster</name>
        <dbReference type="ChEBI" id="CHEBI:49883"/>
        <label>1</label>
    </ligand>
</feature>
<feature type="binding site" evidence="1">
    <location>
        <position position="49"/>
    </location>
    <ligand>
        <name>[4Fe-4S] cluster</name>
        <dbReference type="ChEBI" id="CHEBI:49883"/>
        <label>1</label>
    </ligand>
</feature>
<feature type="binding site" evidence="1">
    <location>
        <position position="55"/>
    </location>
    <ligand>
        <name>[4Fe-4S] cluster</name>
        <dbReference type="ChEBI" id="CHEBI:49883"/>
        <label>1</label>
    </ligand>
</feature>
<feature type="binding site" evidence="1">
    <location>
        <position position="70"/>
    </location>
    <ligand>
        <name>[4Fe-4S] cluster</name>
        <dbReference type="ChEBI" id="CHEBI:49883"/>
        <label>2</label>
        <note>4Fe-4S-S-AdoMet</note>
    </ligand>
</feature>
<feature type="binding site" evidence="1">
    <location>
        <position position="74"/>
    </location>
    <ligand>
        <name>[4Fe-4S] cluster</name>
        <dbReference type="ChEBI" id="CHEBI:49883"/>
        <label>2</label>
        <note>4Fe-4S-S-AdoMet</note>
    </ligand>
</feature>
<feature type="binding site" evidence="1">
    <location>
        <position position="77"/>
    </location>
    <ligand>
        <name>[4Fe-4S] cluster</name>
        <dbReference type="ChEBI" id="CHEBI:49883"/>
        <label>2</label>
        <note>4Fe-4S-S-AdoMet</note>
    </ligand>
</feature>
<feature type="binding site" evidence="1">
    <location>
        <position position="283"/>
    </location>
    <ligand>
        <name>[4Fe-4S] cluster</name>
        <dbReference type="ChEBI" id="CHEBI:49883"/>
        <label>1</label>
    </ligand>
</feature>
<dbReference type="EC" id="2.8.1.8" evidence="1"/>
<dbReference type="EMBL" id="AP008981">
    <property type="protein sequence ID" value="BAG39544.1"/>
    <property type="molecule type" value="Genomic_DNA"/>
</dbReference>
<dbReference type="RefSeq" id="WP_012460808.1">
    <property type="nucleotide sequence ID" value="NC_010793.1"/>
</dbReference>
<dbReference type="SMR" id="B3CQP5"/>
<dbReference type="KEGG" id="ott:OTT_0086"/>
<dbReference type="HOGENOM" id="CLU_033144_2_1_5"/>
<dbReference type="OrthoDB" id="9787898at2"/>
<dbReference type="UniPathway" id="UPA00538">
    <property type="reaction ID" value="UER00593"/>
</dbReference>
<dbReference type="Proteomes" id="UP000001033">
    <property type="component" value="Chromosome"/>
</dbReference>
<dbReference type="GO" id="GO:0005737">
    <property type="term" value="C:cytoplasm"/>
    <property type="evidence" value="ECO:0007669"/>
    <property type="project" value="UniProtKB-SubCell"/>
</dbReference>
<dbReference type="GO" id="GO:0051539">
    <property type="term" value="F:4 iron, 4 sulfur cluster binding"/>
    <property type="evidence" value="ECO:0007669"/>
    <property type="project" value="UniProtKB-UniRule"/>
</dbReference>
<dbReference type="GO" id="GO:0016992">
    <property type="term" value="F:lipoate synthase activity"/>
    <property type="evidence" value="ECO:0007669"/>
    <property type="project" value="UniProtKB-UniRule"/>
</dbReference>
<dbReference type="GO" id="GO:0046872">
    <property type="term" value="F:metal ion binding"/>
    <property type="evidence" value="ECO:0007669"/>
    <property type="project" value="UniProtKB-KW"/>
</dbReference>
<dbReference type="CDD" id="cd01335">
    <property type="entry name" value="Radical_SAM"/>
    <property type="match status" value="1"/>
</dbReference>
<dbReference type="FunFam" id="3.20.20.70:FF:000040">
    <property type="entry name" value="Lipoyl synthase"/>
    <property type="match status" value="1"/>
</dbReference>
<dbReference type="Gene3D" id="3.20.20.70">
    <property type="entry name" value="Aldolase class I"/>
    <property type="match status" value="1"/>
</dbReference>
<dbReference type="HAMAP" id="MF_00206">
    <property type="entry name" value="Lipoyl_synth"/>
    <property type="match status" value="1"/>
</dbReference>
<dbReference type="InterPro" id="IPR013785">
    <property type="entry name" value="Aldolase_TIM"/>
</dbReference>
<dbReference type="InterPro" id="IPR006638">
    <property type="entry name" value="Elp3/MiaA/NifB-like_rSAM"/>
</dbReference>
<dbReference type="InterPro" id="IPR003698">
    <property type="entry name" value="Lipoyl_synth"/>
</dbReference>
<dbReference type="InterPro" id="IPR007197">
    <property type="entry name" value="rSAM"/>
</dbReference>
<dbReference type="NCBIfam" id="TIGR00510">
    <property type="entry name" value="lipA"/>
    <property type="match status" value="1"/>
</dbReference>
<dbReference type="NCBIfam" id="NF004019">
    <property type="entry name" value="PRK05481.1"/>
    <property type="match status" value="1"/>
</dbReference>
<dbReference type="NCBIfam" id="NF009544">
    <property type="entry name" value="PRK12928.1"/>
    <property type="match status" value="1"/>
</dbReference>
<dbReference type="PANTHER" id="PTHR10949">
    <property type="entry name" value="LIPOYL SYNTHASE"/>
    <property type="match status" value="1"/>
</dbReference>
<dbReference type="PANTHER" id="PTHR10949:SF0">
    <property type="entry name" value="LIPOYL SYNTHASE, MITOCHONDRIAL"/>
    <property type="match status" value="1"/>
</dbReference>
<dbReference type="Pfam" id="PF04055">
    <property type="entry name" value="Radical_SAM"/>
    <property type="match status" value="1"/>
</dbReference>
<dbReference type="PIRSF" id="PIRSF005963">
    <property type="entry name" value="Lipoyl_synth"/>
    <property type="match status" value="1"/>
</dbReference>
<dbReference type="SFLD" id="SFLDF00271">
    <property type="entry name" value="lipoyl_synthase"/>
    <property type="match status" value="1"/>
</dbReference>
<dbReference type="SFLD" id="SFLDS00029">
    <property type="entry name" value="Radical_SAM"/>
    <property type="match status" value="1"/>
</dbReference>
<dbReference type="SMART" id="SM00729">
    <property type="entry name" value="Elp3"/>
    <property type="match status" value="1"/>
</dbReference>
<dbReference type="SUPFAM" id="SSF102114">
    <property type="entry name" value="Radical SAM enzymes"/>
    <property type="match status" value="1"/>
</dbReference>
<dbReference type="PROSITE" id="PS51918">
    <property type="entry name" value="RADICAL_SAM"/>
    <property type="match status" value="1"/>
</dbReference>